<organism>
    <name type="scientific">Homo sapiens</name>
    <name type="common">Human</name>
    <dbReference type="NCBI Taxonomy" id="9606"/>
    <lineage>
        <taxon>Eukaryota</taxon>
        <taxon>Metazoa</taxon>
        <taxon>Chordata</taxon>
        <taxon>Craniata</taxon>
        <taxon>Vertebrata</taxon>
        <taxon>Euteleostomi</taxon>
        <taxon>Mammalia</taxon>
        <taxon>Eutheria</taxon>
        <taxon>Euarchontoglires</taxon>
        <taxon>Primates</taxon>
        <taxon>Haplorrhini</taxon>
        <taxon>Catarrhini</taxon>
        <taxon>Hominidae</taxon>
        <taxon>Homo</taxon>
    </lineage>
</organism>
<evidence type="ECO:0000256" key="1">
    <source>
        <dbReference type="SAM" id="MobiDB-lite"/>
    </source>
</evidence>
<evidence type="ECO:0000269" key="2">
    <source>
    </source>
</evidence>
<evidence type="ECO:0000269" key="3">
    <source>
    </source>
</evidence>
<evidence type="ECO:0000269" key="4">
    <source>
    </source>
</evidence>
<evidence type="ECO:0000269" key="5">
    <source>
    </source>
</evidence>
<evidence type="ECO:0000269" key="6">
    <source>
    </source>
</evidence>
<evidence type="ECO:0000269" key="7">
    <source>
    </source>
</evidence>
<evidence type="ECO:0000269" key="8">
    <source>
    </source>
</evidence>
<evidence type="ECO:0000269" key="9">
    <source>
    </source>
</evidence>
<evidence type="ECO:0000303" key="10">
    <source>
    </source>
</evidence>
<evidence type="ECO:0000303" key="11">
    <source>
    </source>
</evidence>
<evidence type="ECO:0000303" key="12">
    <source>
    </source>
</evidence>
<evidence type="ECO:0000305" key="13"/>
<evidence type="ECO:0000305" key="14">
    <source>
    </source>
</evidence>
<evidence type="ECO:0000305" key="15">
    <source>
    </source>
</evidence>
<evidence type="ECO:0000312" key="16">
    <source>
        <dbReference type="HGNC" id="HGNC:27849"/>
    </source>
</evidence>
<evidence type="ECO:0007744" key="17">
    <source>
    </source>
</evidence>
<evidence type="ECO:0007744" key="18">
    <source>
    </source>
</evidence>
<evidence type="ECO:0007744" key="19">
    <source>
    </source>
</evidence>
<evidence type="ECO:0007744" key="20">
    <source>
    </source>
</evidence>
<evidence type="ECO:0007744" key="21">
    <source>
    </source>
</evidence>
<evidence type="ECO:0007744" key="22">
    <source>
    </source>
</evidence>
<evidence type="ECO:0007744" key="23">
    <source>
    </source>
</evidence>
<evidence type="ECO:0007744" key="24">
    <source>
    </source>
</evidence>
<evidence type="ECO:0007829" key="25">
    <source>
        <dbReference type="PDB" id="3WTD"/>
    </source>
</evidence>
<evidence type="ECO:0007829" key="26">
    <source>
        <dbReference type="PDB" id="7ZYG"/>
    </source>
</evidence>
<keyword id="KW-0002">3D-structure</keyword>
<keyword id="KW-0025">Alternative splicing</keyword>
<keyword id="KW-0158">Chromosome</keyword>
<keyword id="KW-0963">Cytoplasm</keyword>
<keyword id="KW-0227">DNA damage</keyword>
<keyword id="KW-0234">DNA repair</keyword>
<keyword id="KW-0539">Nucleus</keyword>
<keyword id="KW-0597">Phosphoprotein</keyword>
<keyword id="KW-1267">Proteomics identification</keyword>
<keyword id="KW-1185">Reference proteome</keyword>
<name>PAXX_HUMAN</name>
<reference key="1">
    <citation type="journal article" date="2004" name="Nature">
        <title>DNA sequence and analysis of human chromosome 9.</title>
        <authorList>
            <person name="Humphray S.J."/>
            <person name="Oliver K."/>
            <person name="Hunt A.R."/>
            <person name="Plumb R.W."/>
            <person name="Loveland J.E."/>
            <person name="Howe K.L."/>
            <person name="Andrews T.D."/>
            <person name="Searle S."/>
            <person name="Hunt S.E."/>
            <person name="Scott C.E."/>
            <person name="Jones M.C."/>
            <person name="Ainscough R."/>
            <person name="Almeida J.P."/>
            <person name="Ambrose K.D."/>
            <person name="Ashwell R.I.S."/>
            <person name="Babbage A.K."/>
            <person name="Babbage S."/>
            <person name="Bagguley C.L."/>
            <person name="Bailey J."/>
            <person name="Banerjee R."/>
            <person name="Barker D.J."/>
            <person name="Barlow K.F."/>
            <person name="Bates K."/>
            <person name="Beasley H."/>
            <person name="Beasley O."/>
            <person name="Bird C.P."/>
            <person name="Bray-Allen S."/>
            <person name="Brown A.J."/>
            <person name="Brown J.Y."/>
            <person name="Burford D."/>
            <person name="Burrill W."/>
            <person name="Burton J."/>
            <person name="Carder C."/>
            <person name="Carter N.P."/>
            <person name="Chapman J.C."/>
            <person name="Chen Y."/>
            <person name="Clarke G."/>
            <person name="Clark S.Y."/>
            <person name="Clee C.M."/>
            <person name="Clegg S."/>
            <person name="Collier R.E."/>
            <person name="Corby N."/>
            <person name="Crosier M."/>
            <person name="Cummings A.T."/>
            <person name="Davies J."/>
            <person name="Dhami P."/>
            <person name="Dunn M."/>
            <person name="Dutta I."/>
            <person name="Dyer L.W."/>
            <person name="Earthrowl M.E."/>
            <person name="Faulkner L."/>
            <person name="Fleming C.J."/>
            <person name="Frankish A."/>
            <person name="Frankland J.A."/>
            <person name="French L."/>
            <person name="Fricker D.G."/>
            <person name="Garner P."/>
            <person name="Garnett J."/>
            <person name="Ghori J."/>
            <person name="Gilbert J.G.R."/>
            <person name="Glison C."/>
            <person name="Grafham D.V."/>
            <person name="Gribble S."/>
            <person name="Griffiths C."/>
            <person name="Griffiths-Jones S."/>
            <person name="Grocock R."/>
            <person name="Guy J."/>
            <person name="Hall R.E."/>
            <person name="Hammond S."/>
            <person name="Harley J.L."/>
            <person name="Harrison E.S.I."/>
            <person name="Hart E.A."/>
            <person name="Heath P.D."/>
            <person name="Henderson C.D."/>
            <person name="Hopkins B.L."/>
            <person name="Howard P.J."/>
            <person name="Howden P.J."/>
            <person name="Huckle E."/>
            <person name="Johnson C."/>
            <person name="Johnson D."/>
            <person name="Joy A.A."/>
            <person name="Kay M."/>
            <person name="Keenan S."/>
            <person name="Kershaw J.K."/>
            <person name="Kimberley A.M."/>
            <person name="King A."/>
            <person name="Knights A."/>
            <person name="Laird G.K."/>
            <person name="Langford C."/>
            <person name="Lawlor S."/>
            <person name="Leongamornlert D.A."/>
            <person name="Leversha M."/>
            <person name="Lloyd C."/>
            <person name="Lloyd D.M."/>
            <person name="Lovell J."/>
            <person name="Martin S."/>
            <person name="Mashreghi-Mohammadi M."/>
            <person name="Matthews L."/>
            <person name="McLaren S."/>
            <person name="McLay K.E."/>
            <person name="McMurray A."/>
            <person name="Milne S."/>
            <person name="Nickerson T."/>
            <person name="Nisbett J."/>
            <person name="Nordsiek G."/>
            <person name="Pearce A.V."/>
            <person name="Peck A.I."/>
            <person name="Porter K.M."/>
            <person name="Pandian R."/>
            <person name="Pelan S."/>
            <person name="Phillimore B."/>
            <person name="Povey S."/>
            <person name="Ramsey Y."/>
            <person name="Rand V."/>
            <person name="Scharfe M."/>
            <person name="Sehra H.K."/>
            <person name="Shownkeen R."/>
            <person name="Sims S.K."/>
            <person name="Skuce C.D."/>
            <person name="Smith M."/>
            <person name="Steward C.A."/>
            <person name="Swarbreck D."/>
            <person name="Sycamore N."/>
            <person name="Tester J."/>
            <person name="Thorpe A."/>
            <person name="Tracey A."/>
            <person name="Tromans A."/>
            <person name="Thomas D.W."/>
            <person name="Wall M."/>
            <person name="Wallis J.M."/>
            <person name="West A.P."/>
            <person name="Whitehead S.L."/>
            <person name="Willey D.L."/>
            <person name="Williams S.A."/>
            <person name="Wilming L."/>
            <person name="Wray P.W."/>
            <person name="Young L."/>
            <person name="Ashurst J.L."/>
            <person name="Coulson A."/>
            <person name="Blocker H."/>
            <person name="Durbin R.M."/>
            <person name="Sulston J.E."/>
            <person name="Hubbard T."/>
            <person name="Jackson M.J."/>
            <person name="Bentley D.R."/>
            <person name="Beck S."/>
            <person name="Rogers J."/>
            <person name="Dunham I."/>
        </authorList>
    </citation>
    <scope>NUCLEOTIDE SEQUENCE [LARGE SCALE GENOMIC DNA]</scope>
</reference>
<reference key="2">
    <citation type="journal article" date="2004" name="Genome Res.">
        <title>The status, quality, and expansion of the NIH full-length cDNA project: the Mammalian Gene Collection (MGC).</title>
        <authorList>
            <consortium name="The MGC Project Team"/>
        </authorList>
    </citation>
    <scope>NUCLEOTIDE SEQUENCE [LARGE SCALE MRNA] (ISOFORM 1)</scope>
    <scope>NUCLEOTIDE SEQUENCE [LARGE SCALE MRNA] OF 17-204 (ISOFORM 2)</scope>
    <source>
        <tissue>Brain</tissue>
    </source>
</reference>
<reference key="3">
    <citation type="journal article" date="2006" name="Cell">
        <title>Global, in vivo, and site-specific phosphorylation dynamics in signaling networks.</title>
        <authorList>
            <person name="Olsen J.V."/>
            <person name="Blagoev B."/>
            <person name="Gnad F."/>
            <person name="Macek B."/>
            <person name="Kumar C."/>
            <person name="Mortensen P."/>
            <person name="Mann M."/>
        </authorList>
    </citation>
    <scope>PHOSPHORYLATION [LARGE SCALE ANALYSIS] AT SER-148</scope>
    <scope>IDENTIFICATION BY MASS SPECTROMETRY [LARGE SCALE ANALYSIS]</scope>
    <source>
        <tissue>Cervix carcinoma</tissue>
    </source>
</reference>
<reference key="4">
    <citation type="journal article" date="2006" name="Nat. Biotechnol.">
        <title>A probability-based approach for high-throughput protein phosphorylation analysis and site localization.</title>
        <authorList>
            <person name="Beausoleil S.A."/>
            <person name="Villen J."/>
            <person name="Gerber S.A."/>
            <person name="Rush J."/>
            <person name="Gygi S.P."/>
        </authorList>
    </citation>
    <scope>PHOSPHORYLATION [LARGE SCALE ANALYSIS] AT SER-148</scope>
    <scope>IDENTIFICATION BY MASS SPECTROMETRY [LARGE SCALE ANALYSIS]</scope>
    <source>
        <tissue>Cervix carcinoma</tissue>
    </source>
</reference>
<reference key="5">
    <citation type="journal article" date="2008" name="Mol. Cell">
        <title>Kinase-selective enrichment enables quantitative phosphoproteomics of the kinome across the cell cycle.</title>
        <authorList>
            <person name="Daub H."/>
            <person name="Olsen J.V."/>
            <person name="Bairlein M."/>
            <person name="Gnad F."/>
            <person name="Oppermann F.S."/>
            <person name="Korner R."/>
            <person name="Greff Z."/>
            <person name="Keri G."/>
            <person name="Stemmann O."/>
            <person name="Mann M."/>
        </authorList>
    </citation>
    <scope>PHOSPHORYLATION [LARGE SCALE ANALYSIS] AT SER-148</scope>
    <scope>IDENTIFICATION BY MASS SPECTROMETRY [LARGE SCALE ANALYSIS]</scope>
    <source>
        <tissue>Cervix carcinoma</tissue>
    </source>
</reference>
<reference key="6">
    <citation type="journal article" date="2008" name="Proc. Natl. Acad. Sci. U.S.A.">
        <title>A quantitative atlas of mitotic phosphorylation.</title>
        <authorList>
            <person name="Dephoure N."/>
            <person name="Zhou C."/>
            <person name="Villen J."/>
            <person name="Beausoleil S.A."/>
            <person name="Bakalarski C.E."/>
            <person name="Elledge S.J."/>
            <person name="Gygi S.P."/>
        </authorList>
    </citation>
    <scope>PHOSPHORYLATION [LARGE SCALE ANALYSIS] AT SER-152</scope>
    <scope>IDENTIFICATION BY MASS SPECTROMETRY [LARGE SCALE ANALYSIS]</scope>
    <source>
        <tissue>Cervix carcinoma</tissue>
    </source>
</reference>
<reference key="7">
    <citation type="journal article" date="2009" name="Anal. Chem.">
        <title>Lys-N and trypsin cover complementary parts of the phosphoproteome in a refined SCX-based approach.</title>
        <authorList>
            <person name="Gauci S."/>
            <person name="Helbig A.O."/>
            <person name="Slijper M."/>
            <person name="Krijgsveld J."/>
            <person name="Heck A.J."/>
            <person name="Mohammed S."/>
        </authorList>
    </citation>
    <scope>IDENTIFICATION BY MASS SPECTROMETRY [LARGE SCALE ANALYSIS]</scope>
</reference>
<reference key="8">
    <citation type="journal article" date="2010" name="Sci. Signal.">
        <title>Quantitative phosphoproteomics reveals widespread full phosphorylation site occupancy during mitosis.</title>
        <authorList>
            <person name="Olsen J.V."/>
            <person name="Vermeulen M."/>
            <person name="Santamaria A."/>
            <person name="Kumar C."/>
            <person name="Miller M.L."/>
            <person name="Jensen L.J."/>
            <person name="Gnad F."/>
            <person name="Cox J."/>
            <person name="Jensen T.S."/>
            <person name="Nigg E.A."/>
            <person name="Brunak S."/>
            <person name="Mann M."/>
        </authorList>
    </citation>
    <scope>PHOSPHORYLATION [LARGE SCALE ANALYSIS] AT SER-148</scope>
    <scope>IDENTIFICATION BY MASS SPECTROMETRY [LARGE SCALE ANALYSIS]</scope>
    <source>
        <tissue>Cervix carcinoma</tissue>
    </source>
</reference>
<reference key="9">
    <citation type="journal article" date="2011" name="BMC Syst. Biol.">
        <title>Initial characterization of the human central proteome.</title>
        <authorList>
            <person name="Burkard T.R."/>
            <person name="Planyavsky M."/>
            <person name="Kaupe I."/>
            <person name="Breitwieser F.P."/>
            <person name="Buerckstuemmer T."/>
            <person name="Bennett K.L."/>
            <person name="Superti-Furga G."/>
            <person name="Colinge J."/>
        </authorList>
    </citation>
    <scope>IDENTIFICATION BY MASS SPECTROMETRY [LARGE SCALE ANALYSIS]</scope>
</reference>
<reference key="10">
    <citation type="journal article" date="2011" name="Sci. Signal.">
        <title>System-wide temporal characterization of the proteome and phosphoproteome of human embryonic stem cell differentiation.</title>
        <authorList>
            <person name="Rigbolt K.T."/>
            <person name="Prokhorova T.A."/>
            <person name="Akimov V."/>
            <person name="Henningsen J."/>
            <person name="Johansen P.T."/>
            <person name="Kratchmarova I."/>
            <person name="Kassem M."/>
            <person name="Mann M."/>
            <person name="Olsen J.V."/>
            <person name="Blagoev B."/>
        </authorList>
    </citation>
    <scope>PHOSPHORYLATION [LARGE SCALE ANALYSIS] AT SER-148 AND SER-152</scope>
    <scope>IDENTIFICATION BY MASS SPECTROMETRY [LARGE SCALE ANALYSIS]</scope>
</reference>
<reference key="11">
    <citation type="journal article" date="2013" name="J. Proteome Res.">
        <title>Toward a comprehensive characterization of a human cancer cell phosphoproteome.</title>
        <authorList>
            <person name="Zhou H."/>
            <person name="Di Palma S."/>
            <person name="Preisinger C."/>
            <person name="Peng M."/>
            <person name="Polat A.N."/>
            <person name="Heck A.J."/>
            <person name="Mohammed S."/>
        </authorList>
    </citation>
    <scope>PHOSPHORYLATION [LARGE SCALE ANALYSIS] AT SER-148 AND SER-152</scope>
    <scope>IDENTIFICATION BY MASS SPECTROMETRY [LARGE SCALE ANALYSIS]</scope>
    <source>
        <tissue>Cervix carcinoma</tissue>
        <tissue>Erythroleukemia</tissue>
    </source>
</reference>
<reference key="12">
    <citation type="journal article" date="2014" name="J. Proteomics">
        <title>An enzyme assisted RP-RPLC approach for in-depth analysis of human liver phosphoproteome.</title>
        <authorList>
            <person name="Bian Y."/>
            <person name="Song C."/>
            <person name="Cheng K."/>
            <person name="Dong M."/>
            <person name="Wang F."/>
            <person name="Huang J."/>
            <person name="Sun D."/>
            <person name="Wang L."/>
            <person name="Ye M."/>
            <person name="Zou H."/>
        </authorList>
    </citation>
    <scope>PHOSPHORYLATION [LARGE SCALE ANALYSIS] AT SER-152</scope>
    <scope>IDENTIFICATION BY MASS SPECTROMETRY [LARGE SCALE ANALYSIS]</scope>
    <source>
        <tissue>Liver</tissue>
    </source>
</reference>
<reference key="13">
    <citation type="journal article" date="2015" name="Cell Death Differ.">
        <title>XLS (c9orf142) is a new component of mammalian DNA double-stranded break repair.</title>
        <authorList>
            <person name="Craxton A."/>
            <person name="Somers J."/>
            <person name="Munnur D."/>
            <person name="Jukes-Jones R."/>
            <person name="Cain K."/>
            <person name="Malewicz M."/>
        </authorList>
    </citation>
    <scope>FUNCTION</scope>
    <scope>SUBUNIT</scope>
</reference>
<reference key="14">
    <citation type="journal article" date="2016" name="Cell Rep.">
        <title>Specific roles of XRCC4 paralogs PAXX and XLF during V(D)J recombination.</title>
        <authorList>
            <person name="Lescale C."/>
            <person name="Lenden Hasse H."/>
            <person name="Blackford A.N."/>
            <person name="Balmus G."/>
            <person name="Bianchi J.J."/>
            <person name="Yu W."/>
            <person name="Bacoccina L."/>
            <person name="Jarade A."/>
            <person name="Clouin C."/>
            <person name="Sivapalan R."/>
            <person name="Reina-San-Martin B."/>
            <person name="Jackson S.P."/>
            <person name="Deriano L."/>
        </authorList>
    </citation>
    <scope>INTERACTION WITH XRCC5 AND XRCC6</scope>
    <scope>MUTAGENESIS OF SER-184 AND 199-VAL--PHE-201</scope>
</reference>
<reference key="15">
    <citation type="journal article" date="2016" name="Cell Rep.">
        <title>PAXX is an accessory c-NHEJ factor that associates with Ku70 and has overlapping functions with XLF.</title>
        <authorList>
            <person name="Tadi S.K."/>
            <person name="Tellier-Lebegue C."/>
            <person name="Nemoz C."/>
            <person name="Drevet P."/>
            <person name="Audebert S."/>
            <person name="Roy S."/>
            <person name="Meek K."/>
            <person name="Charbonnier J.B."/>
            <person name="Modesti M."/>
        </authorList>
    </citation>
    <scope>FUNCTION</scope>
    <scope>INTERACTION WITH XRCC6</scope>
    <scope>PHOSPHORYLATION AT SER-134; THR-145; SER-148 AND SER-152</scope>
    <scope>MUTAGENESIS OF SER-134; 145-THR--SER-152; 177-ARG--ARG-179 AND 199-VAL--PHE-201</scope>
</reference>
<reference key="16">
    <citation type="journal article" date="2016" name="J. Biol. Chem.">
        <title>Different DNA End Configurations Dictate Which NHEJ Components Are Most Important for Joining Efficiency.</title>
        <authorList>
            <person name="Chang H.H.Y."/>
            <person name="Watanabe G."/>
            <person name="Gerodimos C.A."/>
            <person name="Ochi T."/>
            <person name="Blundell T.L."/>
            <person name="Jackson S.P."/>
            <person name="Lieber M.R."/>
        </authorList>
    </citation>
    <scope>FUNCTION</scope>
</reference>
<reference key="17">
    <citation type="journal article" date="2016" name="Nat. Commun.">
        <title>The Ku-binding motif is a conserved module for recruitment and stimulation of non-homologous end-joining proteins.</title>
        <authorList>
            <person name="Grundy G.J."/>
            <person name="Rulten S.L."/>
            <person name="Arribas-Bosacoma R."/>
            <person name="Davidson K."/>
            <person name="Kozik Z."/>
            <person name="Oliver A.W."/>
            <person name="Pearl L.H."/>
            <person name="Caldecott K.W."/>
        </authorList>
    </citation>
    <scope>XLM MOTIF</scope>
</reference>
<reference key="18">
    <citation type="journal article" date="2017" name="Viruses">
        <title>The Non-Homologous End Joining Protein PAXX Acts to Restrict HSV-1 Infection.</title>
        <authorList>
            <person name="Trigg B.J."/>
            <person name="Lauer K.B."/>
            <person name="Fernandes Dos Santos P."/>
            <person name="Coleman H."/>
            <person name="Balmus G."/>
            <person name="Mansur D.S."/>
            <person name="Ferguson B.J."/>
        </authorList>
    </citation>
    <scope>FUNCTION (MICROBIAL INFECTION)</scope>
    <scope>SUBCELLULAR LOCATION (MICROBIAL INFECTION)</scope>
</reference>
<reference key="19">
    <citation type="journal article" date="2018" name="Nat. Commun.">
        <title>PAXX and its paralogs synergistically direct DNA polymerase lambda activity in DNA repair.</title>
        <authorList>
            <person name="Craxton A."/>
            <person name="Munnur D."/>
            <person name="Jukes-Jones R."/>
            <person name="Skalka G."/>
            <person name="Langlais C."/>
            <person name="Cain K."/>
            <person name="Malewicz M."/>
        </authorList>
    </citation>
    <scope>FUNCTION</scope>
    <scope>INTERACTION WITH POLL</scope>
</reference>
<reference key="20">
    <citation type="journal article" date="2015" name="Nat. Commun.">
        <title>Interactome analysis identifies a new paralogue of XRCC4 in non-homologous end joining DNA repair pathway.</title>
        <authorList>
            <person name="Xing M."/>
            <person name="Yang M."/>
            <person name="Huo W."/>
            <person name="Feng F."/>
            <person name="Wei L."/>
            <person name="Jiang W."/>
            <person name="Ning S."/>
            <person name="Yan Z."/>
            <person name="Li W."/>
            <person name="Wang Q."/>
            <person name="Hou M."/>
            <person name="Dong C."/>
            <person name="Guo R."/>
            <person name="Gao G."/>
            <person name="Ji J."/>
            <person name="Zha S."/>
            <person name="Lan L."/>
            <person name="Liang H."/>
            <person name="Xu D."/>
        </authorList>
    </citation>
    <scope>X-RAY CRYSTALLOGRAPHY (2.60 ANGSTROMS) OF 1-145</scope>
    <scope>SUBUNIT</scope>
    <scope>SUBCELLULAR LOCATION</scope>
    <scope>MUTAGENESIS OF 96-LEU--LEU-109; 177-ARG--ARG-179; 186-ILE-ASN-187 AND PHE-201</scope>
    <scope>REGION</scope>
</reference>
<reference key="21">
    <citation type="journal article" date="2015" name="Science">
        <title>DNA repair. PAXX, a paralog of XRCC4 and XLF, interacts with Ku to promote DNA double-strand break repair.</title>
        <authorList>
            <person name="Ochi T."/>
            <person name="Blackford A.N."/>
            <person name="Coates J."/>
            <person name="Jhujh S."/>
            <person name="Mehmood S."/>
            <person name="Tamura N."/>
            <person name="Travers J."/>
            <person name="Wu Q."/>
            <person name="Draviam V.M."/>
            <person name="Robinson C.V."/>
            <person name="Blundell T.L."/>
            <person name="Jackson S.P."/>
        </authorList>
    </citation>
    <scope>X-RAY CRYSTALLOGRAPHY (2.35 ANGSTROMS)</scope>
    <scope>FUNCTION</scope>
    <scope>HOMODIMERIZATION</scope>
    <scope>SUBCELLULAR LOCATION</scope>
    <scope>DOMAIN</scope>
    <scope>INTERACTION WITH XRCC5 AND XRCC6</scope>
    <scope>MUTAGENESIS OF 199-VAL--PHE-201</scope>
</reference>
<proteinExistence type="evidence at protein level"/>
<protein>
    <recommendedName>
        <fullName evidence="13">Protein PAXX</fullName>
    </recommendedName>
    <alternativeName>
        <fullName evidence="11">Paralog of XRCC4 and XLF</fullName>
    </alternativeName>
    <alternativeName>
        <fullName evidence="12">XRCC4-like small protein</fullName>
    </alternativeName>
</protein>
<comment type="function">
    <text evidence="2 3 4 6 7 8 9">Non-essential DNA repair protein involved in DNA non-homologous end joining (NHEJ); participates in double-strand break (DSB) repair and V(D)J recombination (PubMed:25574025, PubMed:25670504, PubMed:25941166, PubMed:27705800). May act as a scaffold required for accumulation of the Ku heterodimer, composed of XRCC5/Ku80 and XRCC6/Ku70, at double-strand break sites and promote the assembly and/or stability of the NHEJ machinery (PubMed:25574025, PubMed:25670504, PubMed:25941166). Involved in NHEJ by promoting the ligation of blunt-ended DNA ends (PubMed:27703001). Together with NHEJ1/XLF, collaborates with DNA polymerase lambda (POLL) to promote joining of non-cohesive DNA ends (PubMed:25670504, PubMed:30250067). Constitutes a non-essential component of classical NHEJ: has a complementary but distinct function with NHEJ1/XLF in DNA repair (PubMed:27705800). Able to restrict infection by herpesvirus 1 (HSV-1) via an unknown mechanism (PubMed:29144403).</text>
</comment>
<comment type="subunit">
    <text evidence="2 3 4 5 7 9">Homodimer (PubMed:25574025). Interacts with the DNA-bound XRCC5/Ku80 and XRCC6/Ku70 heterodimer (Ku complex); the interaction is direct (PubMed:25574025, PubMed:27601299, PubMed:27705800). Associated component of the non-homologous end joining (NHEJ) complex, composed of the core proteins PRKDC, LIG4, XRCC4, XRCC6/Ku70, XRCC5/Ku86 and NHEJ1/XLF (PubMed:25670504, PubMed:25941166). Interacts with POLL (DNA polymerase lambda); promoting POLL recruitment to double-strand breaks (DSBs) and stimulation of the end-filling activity of POLL (PubMed:30250067).</text>
</comment>
<comment type="interaction">
    <interactant intactId="EBI-2839993">
        <id>Q9BUH6</id>
    </interactant>
    <interactant intactId="EBI-748974">
        <id>Q96CV9</id>
        <label>OPTN</label>
    </interactant>
    <organismsDiffer>false</organismsDiffer>
    <experiments>3</experiments>
</comment>
<comment type="interaction">
    <interactant intactId="EBI-2839993">
        <id>Q9BUH6</id>
    </interactant>
    <interactant intactId="EBI-357997">
        <id>P13010</id>
        <label>XRCC5</label>
    </interactant>
    <organismsDiffer>false</organismsDiffer>
    <experiments>2</experiments>
</comment>
<comment type="interaction">
    <interactant intactId="EBI-16137878">
        <id>Q9BUH6-1</id>
    </interactant>
    <interactant intactId="EBI-16137878">
        <id>Q9BUH6-1</id>
        <label>PAXX</label>
    </interactant>
    <organismsDiffer>false</organismsDiffer>
    <experiments>4</experiments>
</comment>
<comment type="interaction">
    <interactant intactId="EBI-16137878">
        <id>Q9BUH6-1</id>
    </interactant>
    <interactant intactId="EBI-357997">
        <id>P13010</id>
        <label>XRCC5</label>
    </interactant>
    <organismsDiffer>false</organismsDiffer>
    <experiments>5</experiments>
</comment>
<comment type="subcellular location">
    <subcellularLocation>
        <location evidence="2 3 8">Nucleus</location>
    </subcellularLocation>
    <subcellularLocation>
        <location evidence="2 3">Chromosome</location>
    </subcellularLocation>
    <text evidence="2 3">Predominantly localizes to the nucleus. Accumulates at sites of DNA damage generated by laser microirradiation.</text>
</comment>
<comment type="subcellular location">
    <subcellularLocation>
        <location evidence="8">Cytoplasm</location>
    </subcellularLocation>
    <text evidence="8">(Microbial infection) Upon infection by herpesvirus 1 (HSV-1), it is partially translocated into the cytoplasm in an HSV-1-dependent manner.</text>
</comment>
<comment type="alternative products">
    <event type="alternative splicing"/>
    <isoform>
        <id>Q9BUH6-1</id>
        <name>1</name>
        <sequence type="displayed"/>
    </isoform>
    <isoform>
        <id>Q9BUH6-2</id>
        <name>2</name>
        <sequence type="described" ref="VSP_024996 VSP_024997"/>
    </isoform>
</comment>
<comment type="domain">
    <text evidence="2">The N-terminus (residues 1-113) forms a head domain that is structurally related to those of XRCC4, XLF/NHEJ1, and SASS6.</text>
</comment>
<comment type="PTM">
    <text evidence="7">Phosphorylation may inhibit interaction with the DNA-bound XRCC5/Ku80 and XRCC6/Ku70 heterodimer (Ku complex).</text>
</comment>
<comment type="similarity">
    <text evidence="13">Belongs to the XRCC4-XLF family. PAXX subfamily.</text>
</comment>
<gene>
    <name evidence="11 16" type="primary">PAXX</name>
    <name evidence="16" type="synonym">C9orf142</name>
    <name evidence="12" type="synonym">XLS</name>
</gene>
<sequence length="204" mass="21640">MDPLSPPLCTLPPGPEPPRFVCYCEGEESGEGDRGGFNLYVTDAAELWSTCFTPDSLAALKARFGLSAAEDITPRFRAACEQQAVALTLQEDRASLTLSGGPSALAFDLSKVPGPEAAPRLRALTLGLAKRVWSLERRLAAAEETAVSPRKSPRPAGPQLFLPDPDPQRGGPGPGVRRRCPGESLINPGFKSKKPAGGVDFDET</sequence>
<accession>Q9BUH6</accession>
<accession>Q8IY19</accession>
<dbReference type="EMBL" id="AL807752">
    <property type="status" value="NOT_ANNOTATED_CDS"/>
    <property type="molecule type" value="Genomic_DNA"/>
</dbReference>
<dbReference type="EMBL" id="BC002613">
    <property type="protein sequence ID" value="AAH02613.2"/>
    <property type="molecule type" value="mRNA"/>
</dbReference>
<dbReference type="EMBL" id="BC038191">
    <property type="protein sequence ID" value="AAH38191.1"/>
    <property type="molecule type" value="mRNA"/>
</dbReference>
<dbReference type="CCDS" id="CCDS7020.1">
    <molecule id="Q9BUH6-1"/>
</dbReference>
<dbReference type="RefSeq" id="NP_899064.1">
    <molecule id="Q9BUH6-1"/>
    <property type="nucleotide sequence ID" value="NM_183241.3"/>
</dbReference>
<dbReference type="PDB" id="3WTD">
    <property type="method" value="X-ray"/>
    <property type="resolution" value="2.35 A"/>
    <property type="chains" value="A/B=1-166"/>
</dbReference>
<dbReference type="PDB" id="3WTF">
    <property type="method" value="X-ray"/>
    <property type="resolution" value="3.45 A"/>
    <property type="chains" value="A/B=1-204"/>
</dbReference>
<dbReference type="PDB" id="4WJA">
    <property type="method" value="X-ray"/>
    <property type="resolution" value="2.60 A"/>
    <property type="chains" value="A/B=1-145"/>
</dbReference>
<dbReference type="PDB" id="7ZWA">
    <property type="method" value="EM"/>
    <property type="resolution" value="2.80 A"/>
    <property type="chains" value="C=1-204"/>
</dbReference>
<dbReference type="PDB" id="7ZYG">
    <property type="method" value="EM"/>
    <property type="resolution" value="2.68 A"/>
    <property type="chains" value="C=1-204"/>
</dbReference>
<dbReference type="PDB" id="8ASC">
    <property type="method" value="X-ray"/>
    <property type="resolution" value="2.95 A"/>
    <property type="chains" value="J/T=177-204"/>
</dbReference>
<dbReference type="PDB" id="8BH3">
    <property type="method" value="EM"/>
    <property type="resolution" value="4.55 A"/>
    <property type="chains" value="D/M=1-204"/>
</dbReference>
<dbReference type="PDB" id="8BHV">
    <property type="method" value="EM"/>
    <property type="resolution" value="4.51 A"/>
    <property type="chains" value="c/i=1-204"/>
</dbReference>
<dbReference type="PDB" id="8BHY">
    <property type="method" value="EM"/>
    <property type="resolution" value="5.33 A"/>
    <property type="chains" value="D/M=1-204"/>
</dbReference>
<dbReference type="PDB" id="8EZA">
    <property type="method" value="EM"/>
    <property type="resolution" value="4.39 A"/>
    <property type="chains" value="S/T=1-204"/>
</dbReference>
<dbReference type="PDB" id="8EZB">
    <property type="method" value="EM"/>
    <property type="resolution" value="8.90 A"/>
    <property type="chains" value="S/T=1-204"/>
</dbReference>
<dbReference type="PDBsum" id="3WTD"/>
<dbReference type="PDBsum" id="3WTF"/>
<dbReference type="PDBsum" id="4WJA"/>
<dbReference type="PDBsum" id="7ZWA"/>
<dbReference type="PDBsum" id="7ZYG"/>
<dbReference type="PDBsum" id="8ASC"/>
<dbReference type="PDBsum" id="8BH3"/>
<dbReference type="PDBsum" id="8BHV"/>
<dbReference type="PDBsum" id="8BHY"/>
<dbReference type="PDBsum" id="8EZA"/>
<dbReference type="PDBsum" id="8EZB"/>
<dbReference type="EMDB" id="EMD-14995"/>
<dbReference type="EMDB" id="EMD-15022"/>
<dbReference type="EMDB" id="EMD-16044"/>
<dbReference type="EMDB" id="EMD-16070"/>
<dbReference type="EMDB" id="EMD-16074"/>
<dbReference type="EMDB" id="EMD-28732"/>
<dbReference type="EMDB" id="EMD-28733"/>
<dbReference type="EMDB" id="EMD-28735"/>
<dbReference type="SMR" id="Q9BUH6"/>
<dbReference type="BioGRID" id="130343">
    <property type="interactions" value="53"/>
</dbReference>
<dbReference type="CORUM" id="Q9BUH6"/>
<dbReference type="DIP" id="DIP-61486N"/>
<dbReference type="FunCoup" id="Q9BUH6">
    <property type="interactions" value="520"/>
</dbReference>
<dbReference type="IntAct" id="Q9BUH6">
    <property type="interactions" value="29"/>
</dbReference>
<dbReference type="MINT" id="Q9BUH6"/>
<dbReference type="STRING" id="9606.ENSP00000360682"/>
<dbReference type="GlyCosmos" id="Q9BUH6">
    <property type="glycosylation" value="2 sites, 2 glycans"/>
</dbReference>
<dbReference type="GlyGen" id="Q9BUH6">
    <property type="glycosylation" value="2 sites, 2 O-linked glycans (2 sites)"/>
</dbReference>
<dbReference type="iPTMnet" id="Q9BUH6"/>
<dbReference type="PhosphoSitePlus" id="Q9BUH6"/>
<dbReference type="SwissPalm" id="Q9BUH6"/>
<dbReference type="BioMuta" id="PAXX"/>
<dbReference type="DMDM" id="74752355"/>
<dbReference type="jPOST" id="Q9BUH6"/>
<dbReference type="MassIVE" id="Q9BUH6"/>
<dbReference type="PaxDb" id="9606-ENSP00000360682"/>
<dbReference type="PeptideAtlas" id="Q9BUH6"/>
<dbReference type="ProteomicsDB" id="79085">
    <molecule id="Q9BUH6-1"/>
</dbReference>
<dbReference type="ProteomicsDB" id="79086">
    <molecule id="Q9BUH6-2"/>
</dbReference>
<dbReference type="Pumba" id="Q9BUH6"/>
<dbReference type="Antibodypedia" id="51856">
    <property type="antibodies" value="51 antibodies from 12 providers"/>
</dbReference>
<dbReference type="DNASU" id="286257"/>
<dbReference type="Ensembl" id="ENST00000371620.4">
    <molecule id="Q9BUH6-1"/>
    <property type="protein sequence ID" value="ENSP00000360682.3"/>
    <property type="gene ID" value="ENSG00000148362.11"/>
</dbReference>
<dbReference type="GeneID" id="286257"/>
<dbReference type="KEGG" id="hsa:286257"/>
<dbReference type="MANE-Select" id="ENST00000371620.4">
    <property type="protein sequence ID" value="ENSP00000360682.3"/>
    <property type="RefSeq nucleotide sequence ID" value="NM_183241.3"/>
    <property type="RefSeq protein sequence ID" value="NP_899064.1"/>
</dbReference>
<dbReference type="UCSC" id="uc004cki.3">
    <molecule id="Q9BUH6-1"/>
    <property type="organism name" value="human"/>
</dbReference>
<dbReference type="AGR" id="HGNC:27849"/>
<dbReference type="CTD" id="286257"/>
<dbReference type="DisGeNET" id="286257"/>
<dbReference type="GeneCards" id="PAXX"/>
<dbReference type="HGNC" id="HGNC:27849">
    <property type="gene designation" value="PAXX"/>
</dbReference>
<dbReference type="HPA" id="ENSG00000148362">
    <property type="expression patterns" value="Low tissue specificity"/>
</dbReference>
<dbReference type="MIM" id="616315">
    <property type="type" value="gene"/>
</dbReference>
<dbReference type="neXtProt" id="NX_Q9BUH6"/>
<dbReference type="OpenTargets" id="ENSG00000148362"/>
<dbReference type="PharmGKB" id="PA143485344"/>
<dbReference type="VEuPathDB" id="HostDB:ENSG00000148362"/>
<dbReference type="eggNOG" id="ENOG502S6IF">
    <property type="taxonomic scope" value="Eukaryota"/>
</dbReference>
<dbReference type="GeneTree" id="ENSGT00390000000543"/>
<dbReference type="HOGENOM" id="CLU_121226_0_0_1"/>
<dbReference type="InParanoid" id="Q9BUH6"/>
<dbReference type="OMA" id="ANVWSVE"/>
<dbReference type="OrthoDB" id="5969703at2759"/>
<dbReference type="PAN-GO" id="Q9BUH6">
    <property type="GO annotations" value="5 GO annotations based on evolutionary models"/>
</dbReference>
<dbReference type="PhylomeDB" id="Q9BUH6"/>
<dbReference type="TreeFam" id="TF337247"/>
<dbReference type="PathwayCommons" id="Q9BUH6"/>
<dbReference type="SignaLink" id="Q9BUH6"/>
<dbReference type="BioGRID-ORCS" id="286257">
    <property type="hits" value="8 hits in 1138 CRISPR screens"/>
</dbReference>
<dbReference type="EvolutionaryTrace" id="Q9BUH6"/>
<dbReference type="GenomeRNAi" id="286257"/>
<dbReference type="Pharos" id="Q9BUH6">
    <property type="development level" value="Tbio"/>
</dbReference>
<dbReference type="PRO" id="PR:Q9BUH6"/>
<dbReference type="Proteomes" id="UP000005640">
    <property type="component" value="Chromosome 9"/>
</dbReference>
<dbReference type="RNAct" id="Q9BUH6">
    <property type="molecule type" value="protein"/>
</dbReference>
<dbReference type="Bgee" id="ENSG00000148362">
    <property type="expression patterns" value="Expressed in granulocyte and 148 other cell types or tissues"/>
</dbReference>
<dbReference type="GO" id="GO:0005737">
    <property type="term" value="C:cytoplasm"/>
    <property type="evidence" value="ECO:0007669"/>
    <property type="project" value="UniProtKB-SubCell"/>
</dbReference>
<dbReference type="GO" id="GO:0070419">
    <property type="term" value="C:nonhomologous end joining complex"/>
    <property type="evidence" value="ECO:0000314"/>
    <property type="project" value="UniProtKB"/>
</dbReference>
<dbReference type="GO" id="GO:0005654">
    <property type="term" value="C:nucleoplasm"/>
    <property type="evidence" value="ECO:0000314"/>
    <property type="project" value="HPA"/>
</dbReference>
<dbReference type="GO" id="GO:0005634">
    <property type="term" value="C:nucleus"/>
    <property type="evidence" value="ECO:0000314"/>
    <property type="project" value="UniProtKB"/>
</dbReference>
<dbReference type="GO" id="GO:0035861">
    <property type="term" value="C:site of double-strand break"/>
    <property type="evidence" value="ECO:0000314"/>
    <property type="project" value="UniProtKB"/>
</dbReference>
<dbReference type="GO" id="GO:0070182">
    <property type="term" value="F:DNA polymerase binding"/>
    <property type="evidence" value="ECO:0000353"/>
    <property type="project" value="UniProtKB"/>
</dbReference>
<dbReference type="GO" id="GO:0042802">
    <property type="term" value="F:identical protein binding"/>
    <property type="evidence" value="ECO:0000353"/>
    <property type="project" value="IntAct"/>
</dbReference>
<dbReference type="GO" id="GO:0060090">
    <property type="term" value="F:molecular adaptor activity"/>
    <property type="evidence" value="ECO:0000314"/>
    <property type="project" value="UniProtKB"/>
</dbReference>
<dbReference type="GO" id="GO:0042803">
    <property type="term" value="F:protein homodimerization activity"/>
    <property type="evidence" value="ECO:0000314"/>
    <property type="project" value="UniProtKB"/>
</dbReference>
<dbReference type="GO" id="GO:0006974">
    <property type="term" value="P:DNA damage response"/>
    <property type="evidence" value="ECO:0000314"/>
    <property type="project" value="UniProtKB"/>
</dbReference>
<dbReference type="GO" id="GO:0006303">
    <property type="term" value="P:double-strand break repair via nonhomologous end joining"/>
    <property type="evidence" value="ECO:0000314"/>
    <property type="project" value="UniProtKB"/>
</dbReference>
<dbReference type="CDD" id="cd22286">
    <property type="entry name" value="HD_PAXX_N"/>
    <property type="match status" value="1"/>
</dbReference>
<dbReference type="DisProt" id="DP01795"/>
<dbReference type="InterPro" id="IPR027873">
    <property type="entry name" value="PAXX"/>
</dbReference>
<dbReference type="InterPro" id="IPR054134">
    <property type="entry name" value="PAXX_N"/>
</dbReference>
<dbReference type="PANTHER" id="PTHR28586">
    <property type="entry name" value="PROTEIN PAXX"/>
    <property type="match status" value="1"/>
</dbReference>
<dbReference type="PANTHER" id="PTHR28586:SF1">
    <property type="entry name" value="PROTEIN PAXX"/>
    <property type="match status" value="1"/>
</dbReference>
<dbReference type="Pfam" id="PF15384">
    <property type="entry name" value="PAXX"/>
    <property type="match status" value="1"/>
</dbReference>
<feature type="chain" id="PRO_0000286104" description="Protein PAXX">
    <location>
        <begin position="1"/>
        <end position="204"/>
    </location>
</feature>
<feature type="domain" description="PISA" evidence="13">
    <location>
        <begin position="37"/>
        <end position="79"/>
    </location>
</feature>
<feature type="region of interest" description="Disordered" evidence="1">
    <location>
        <begin position="143"/>
        <end position="204"/>
    </location>
</feature>
<feature type="region of interest" description="Mediates interaction with XRCC5/Ku80 and XRCC6/Ku70 and association with the non-homologous end joining core complex" evidence="2 3">
    <location>
        <begin position="171"/>
        <end position="204"/>
    </location>
</feature>
<feature type="short sequence motif" description="XLM" evidence="14">
    <location>
        <begin position="190"/>
        <end position="204"/>
    </location>
</feature>
<feature type="modified residue" description="Phosphoserine" evidence="15">
    <location>
        <position position="134"/>
    </location>
</feature>
<feature type="modified residue" description="Phosphothreonine" evidence="15">
    <location>
        <position position="145"/>
    </location>
</feature>
<feature type="modified residue" description="Phosphoserine" evidence="15 17 18 20 21 22 23">
    <location>
        <position position="148"/>
    </location>
</feature>
<feature type="modified residue" description="Phosphoserine" evidence="15 19 22 23 24">
    <location>
        <position position="152"/>
    </location>
</feature>
<feature type="splice variant" id="VSP_024996" description="In isoform 2." evidence="10">
    <original>KARFGLSAAEDITPRFRAACEQQAVALTLQEDRASLTLSGGPSALA</original>
    <variation>VGNWAGLGAATPLLAVQIVYGATDIWDSPEGSDTLCPPCSCSPPIG</variation>
    <location>
        <begin position="61"/>
        <end position="106"/>
    </location>
</feature>
<feature type="splice variant" id="VSP_024997" description="In isoform 2." evidence="10">
    <location>
        <begin position="107"/>
        <end position="204"/>
    </location>
</feature>
<feature type="mutagenesis site" description="Loss of function in DNA non-homologous end joining (NHEJ)." evidence="3">
    <original>LTLSGGPSALAFDL</original>
    <variation>DTDSGGPSADAFDD</variation>
    <location>
        <begin position="96"/>
        <end position="109"/>
    </location>
</feature>
<feature type="mutagenesis site" description="Does not affect interaction with the DNA-bound XRCC5/Ku80 and XRCC6/Ku70 heterodimer; when associated with 145-D--152." evidence="7">
    <original>S</original>
    <variation>A</variation>
    <location>
        <position position="134"/>
    </location>
</feature>
<feature type="mutagenesis site" description="Phospho-mimetic mutant; abolished interaction with DNA-bound the DNA-bound XRCC5/Ku80 and XRCC6/Ku70 heterodimer; when associated with 145-D--152." evidence="7">
    <original>S</original>
    <variation>D</variation>
    <location>
        <position position="134"/>
    </location>
</feature>
<feature type="mutagenesis site" description="Does not affect interaction with the DNA-bound XRCC5/Ku80 and XRCC6/Ku70 heterodimer; when associated with A-134." evidence="7">
    <original>TAVSPRKS</original>
    <variation>AAVAPRKA</variation>
    <location>
        <begin position="145"/>
        <end position="152"/>
    </location>
</feature>
<feature type="mutagenesis site" description="Phospho-mimetic mutant; abolished interaction with the DNA-bound XRCC5/Ku80 and XRCC6/Ku70 heterodimer; when associated with D-134." evidence="7">
    <original>TAVSPRKS</original>
    <variation>DAVDPRKD</variation>
    <location>
        <begin position="145"/>
        <end position="152"/>
    </location>
</feature>
<feature type="mutagenesis site" description="Abolishes the association with the non-homologous end joining complex. Abolished interaction with XRCC6/Ku70." evidence="3 7">
    <original>RRR</original>
    <variation>AAA</variation>
    <location>
        <begin position="177"/>
        <end position="179"/>
    </location>
</feature>
<feature type="mutagenesis site" description="Abolished interaction with XRCC5/Ku80 and XRCC6/Ku70." evidence="5">
    <original>S</original>
    <variation>E</variation>
    <location>
        <position position="184"/>
    </location>
</feature>
<feature type="mutagenesis site" description="Abolishes the association with the non-homologous end joining complex." evidence="3">
    <original>IN</original>
    <variation>AA</variation>
    <location>
        <begin position="186"/>
        <end position="187"/>
    </location>
</feature>
<feature type="mutagenesis site" description="Abolished interaction with XRCC5/Ku80 and XRCC6/Ku70." evidence="2 5">
    <original>VDF</original>
    <variation>ADA</variation>
    <location>
        <begin position="199"/>
        <end position="201"/>
    </location>
</feature>
<feature type="mutagenesis site" description="Abolishes the association with the non-homologous end joining complex and localization to double-strand break sites. Abolished interaction with XRCC6/Ku70." evidence="3 7">
    <original>F</original>
    <variation>A</variation>
    <location>
        <position position="201"/>
    </location>
</feature>
<feature type="strand" evidence="25">
    <location>
        <begin position="8"/>
        <end position="12"/>
    </location>
</feature>
<feature type="strand" evidence="25">
    <location>
        <begin position="14"/>
        <end position="16"/>
    </location>
</feature>
<feature type="strand" evidence="25">
    <location>
        <begin position="20"/>
        <end position="25"/>
    </location>
</feature>
<feature type="strand" evidence="25">
    <location>
        <begin position="30"/>
        <end position="32"/>
    </location>
</feature>
<feature type="strand" evidence="25">
    <location>
        <begin position="38"/>
        <end position="42"/>
    </location>
</feature>
<feature type="strand" evidence="25">
    <location>
        <begin position="44"/>
        <end position="49"/>
    </location>
</feature>
<feature type="helix" evidence="25">
    <location>
        <begin position="54"/>
        <end position="64"/>
    </location>
</feature>
<feature type="helix" evidence="25">
    <location>
        <begin position="73"/>
        <end position="82"/>
    </location>
</feature>
<feature type="strand" evidence="25">
    <location>
        <begin position="85"/>
        <end position="90"/>
    </location>
</feature>
<feature type="strand" evidence="25">
    <location>
        <begin position="93"/>
        <end position="98"/>
    </location>
</feature>
<feature type="strand" evidence="25">
    <location>
        <begin position="100"/>
        <end position="103"/>
    </location>
</feature>
<feature type="strand" evidence="25">
    <location>
        <begin position="105"/>
        <end position="111"/>
    </location>
</feature>
<feature type="helix" evidence="25">
    <location>
        <begin position="114"/>
        <end position="140"/>
    </location>
</feature>
<feature type="strand" evidence="26">
    <location>
        <begin position="185"/>
        <end position="187"/>
    </location>
</feature>